<reference key="1">
    <citation type="submission" date="2007-11" db="EMBL/GenBank/DDBJ databases">
        <authorList>
            <consortium name="The Salmonella enterica serovar Arizonae Genome Sequencing Project"/>
            <person name="McClelland M."/>
            <person name="Sanderson E.K."/>
            <person name="Porwollik S."/>
            <person name="Spieth J."/>
            <person name="Clifton W.S."/>
            <person name="Fulton R."/>
            <person name="Chunyan W."/>
            <person name="Wollam A."/>
            <person name="Shah N."/>
            <person name="Pepin K."/>
            <person name="Bhonagiri V."/>
            <person name="Nash W."/>
            <person name="Johnson M."/>
            <person name="Thiruvilangam P."/>
            <person name="Wilson R."/>
        </authorList>
    </citation>
    <scope>NUCLEOTIDE SEQUENCE [LARGE SCALE GENOMIC DNA]</scope>
    <source>
        <strain>ATCC BAA-731 / CDC346-86 / RSK2980</strain>
    </source>
</reference>
<feature type="chain" id="PRO_1000078206" description="Ribonuclease P protein component">
    <location>
        <begin position="1"/>
        <end position="119"/>
    </location>
</feature>
<gene>
    <name evidence="1" type="primary">rnpA</name>
    <name type="ordered locus">SARI_03805</name>
</gene>
<accession>A9MJT8</accession>
<comment type="function">
    <text evidence="1">RNaseP catalyzes the removal of the 5'-leader sequence from pre-tRNA to produce the mature 5'-terminus. It can also cleave other RNA substrates such as 4.5S RNA. The protein component plays an auxiliary but essential role in vivo by binding to the 5'-leader sequence and broadening the substrate specificity of the ribozyme.</text>
</comment>
<comment type="catalytic activity">
    <reaction evidence="1">
        <text>Endonucleolytic cleavage of RNA, removing 5'-extranucleotides from tRNA precursor.</text>
        <dbReference type="EC" id="3.1.26.5"/>
    </reaction>
</comment>
<comment type="subunit">
    <text evidence="1">Consists of a catalytic RNA component (M1 or rnpB) and a protein subunit.</text>
</comment>
<comment type="similarity">
    <text evidence="1">Belongs to the RnpA family.</text>
</comment>
<sequence length="119" mass="13797">MVKLAFPRELRLLTPAHFTFVFQQPQRAGTPQITILGRLNSLGHPRIGLTVAKKNVRRAHERNRIKRLTRESFRQRQHELPAMDFVVVAKKGVADLDNRALSEALEKLWRRHCRLARGS</sequence>
<name>RNPA_SALAR</name>
<evidence type="ECO:0000255" key="1">
    <source>
        <dbReference type="HAMAP-Rule" id="MF_00227"/>
    </source>
</evidence>
<dbReference type="EC" id="3.1.26.5" evidence="1"/>
<dbReference type="EMBL" id="CP000880">
    <property type="protein sequence ID" value="ABX23599.1"/>
    <property type="molecule type" value="Genomic_DNA"/>
</dbReference>
<dbReference type="BMRB" id="A9MJT8"/>
<dbReference type="SMR" id="A9MJT8"/>
<dbReference type="STRING" id="41514.SARI_03805"/>
<dbReference type="KEGG" id="ses:SARI_03805"/>
<dbReference type="HOGENOM" id="CLU_117179_11_0_6"/>
<dbReference type="Proteomes" id="UP000002084">
    <property type="component" value="Chromosome"/>
</dbReference>
<dbReference type="GO" id="GO:0030677">
    <property type="term" value="C:ribonuclease P complex"/>
    <property type="evidence" value="ECO:0007669"/>
    <property type="project" value="TreeGrafter"/>
</dbReference>
<dbReference type="GO" id="GO:0042781">
    <property type="term" value="F:3'-tRNA processing endoribonuclease activity"/>
    <property type="evidence" value="ECO:0007669"/>
    <property type="project" value="TreeGrafter"/>
</dbReference>
<dbReference type="GO" id="GO:0004526">
    <property type="term" value="F:ribonuclease P activity"/>
    <property type="evidence" value="ECO:0007669"/>
    <property type="project" value="UniProtKB-UniRule"/>
</dbReference>
<dbReference type="GO" id="GO:0000049">
    <property type="term" value="F:tRNA binding"/>
    <property type="evidence" value="ECO:0007669"/>
    <property type="project" value="UniProtKB-UniRule"/>
</dbReference>
<dbReference type="GO" id="GO:0001682">
    <property type="term" value="P:tRNA 5'-leader removal"/>
    <property type="evidence" value="ECO:0007669"/>
    <property type="project" value="UniProtKB-UniRule"/>
</dbReference>
<dbReference type="FunFam" id="3.30.230.10:FF:000016">
    <property type="entry name" value="Ribonuclease P protein component"/>
    <property type="match status" value="1"/>
</dbReference>
<dbReference type="Gene3D" id="3.30.230.10">
    <property type="match status" value="1"/>
</dbReference>
<dbReference type="HAMAP" id="MF_00227">
    <property type="entry name" value="RNase_P"/>
    <property type="match status" value="1"/>
</dbReference>
<dbReference type="InterPro" id="IPR020568">
    <property type="entry name" value="Ribosomal_Su5_D2-typ_SF"/>
</dbReference>
<dbReference type="InterPro" id="IPR014721">
    <property type="entry name" value="Ribsml_uS5_D2-typ_fold_subgr"/>
</dbReference>
<dbReference type="InterPro" id="IPR000100">
    <property type="entry name" value="RNase_P"/>
</dbReference>
<dbReference type="InterPro" id="IPR020539">
    <property type="entry name" value="RNase_P_CS"/>
</dbReference>
<dbReference type="NCBIfam" id="TIGR00188">
    <property type="entry name" value="rnpA"/>
    <property type="match status" value="1"/>
</dbReference>
<dbReference type="PANTHER" id="PTHR33992">
    <property type="entry name" value="RIBONUCLEASE P PROTEIN COMPONENT"/>
    <property type="match status" value="1"/>
</dbReference>
<dbReference type="PANTHER" id="PTHR33992:SF1">
    <property type="entry name" value="RIBONUCLEASE P PROTEIN COMPONENT"/>
    <property type="match status" value="1"/>
</dbReference>
<dbReference type="Pfam" id="PF00825">
    <property type="entry name" value="Ribonuclease_P"/>
    <property type="match status" value="1"/>
</dbReference>
<dbReference type="SUPFAM" id="SSF54211">
    <property type="entry name" value="Ribosomal protein S5 domain 2-like"/>
    <property type="match status" value="1"/>
</dbReference>
<dbReference type="PROSITE" id="PS00648">
    <property type="entry name" value="RIBONUCLEASE_P"/>
    <property type="match status" value="1"/>
</dbReference>
<organism>
    <name type="scientific">Salmonella arizonae (strain ATCC BAA-731 / CDC346-86 / RSK2980)</name>
    <dbReference type="NCBI Taxonomy" id="41514"/>
    <lineage>
        <taxon>Bacteria</taxon>
        <taxon>Pseudomonadati</taxon>
        <taxon>Pseudomonadota</taxon>
        <taxon>Gammaproteobacteria</taxon>
        <taxon>Enterobacterales</taxon>
        <taxon>Enterobacteriaceae</taxon>
        <taxon>Salmonella</taxon>
    </lineage>
</organism>
<keyword id="KW-0255">Endonuclease</keyword>
<keyword id="KW-0378">Hydrolase</keyword>
<keyword id="KW-0540">Nuclease</keyword>
<keyword id="KW-1185">Reference proteome</keyword>
<keyword id="KW-0694">RNA-binding</keyword>
<keyword id="KW-0819">tRNA processing</keyword>
<proteinExistence type="inferred from homology"/>
<protein>
    <recommendedName>
        <fullName evidence="1">Ribonuclease P protein component</fullName>
        <shortName evidence="1">RNase P protein</shortName>
        <shortName evidence="1">RNaseP protein</shortName>
        <ecNumber evidence="1">3.1.26.5</ecNumber>
    </recommendedName>
    <alternativeName>
        <fullName evidence="1">Protein C5</fullName>
    </alternativeName>
</protein>